<organism>
    <name type="scientific">Shewanella sp. (strain MR-7)</name>
    <dbReference type="NCBI Taxonomy" id="60481"/>
    <lineage>
        <taxon>Bacteria</taxon>
        <taxon>Pseudomonadati</taxon>
        <taxon>Pseudomonadota</taxon>
        <taxon>Gammaproteobacteria</taxon>
        <taxon>Alteromonadales</taxon>
        <taxon>Shewanellaceae</taxon>
        <taxon>Shewanella</taxon>
    </lineage>
</organism>
<proteinExistence type="inferred from homology"/>
<feature type="chain" id="PRO_1000054298" description="Multifunctional CCA protein">
    <location>
        <begin position="1"/>
        <end position="416"/>
    </location>
</feature>
<feature type="domain" description="HD" evidence="1">
    <location>
        <begin position="228"/>
        <end position="329"/>
    </location>
</feature>
<feature type="binding site" evidence="1">
    <location>
        <position position="8"/>
    </location>
    <ligand>
        <name>ATP</name>
        <dbReference type="ChEBI" id="CHEBI:30616"/>
    </ligand>
</feature>
<feature type="binding site" evidence="1">
    <location>
        <position position="8"/>
    </location>
    <ligand>
        <name>CTP</name>
        <dbReference type="ChEBI" id="CHEBI:37563"/>
    </ligand>
</feature>
<feature type="binding site" evidence="1">
    <location>
        <position position="11"/>
    </location>
    <ligand>
        <name>ATP</name>
        <dbReference type="ChEBI" id="CHEBI:30616"/>
    </ligand>
</feature>
<feature type="binding site" evidence="1">
    <location>
        <position position="11"/>
    </location>
    <ligand>
        <name>CTP</name>
        <dbReference type="ChEBI" id="CHEBI:37563"/>
    </ligand>
</feature>
<feature type="binding site" evidence="1">
    <location>
        <position position="21"/>
    </location>
    <ligand>
        <name>Mg(2+)</name>
        <dbReference type="ChEBI" id="CHEBI:18420"/>
    </ligand>
</feature>
<feature type="binding site" evidence="1">
    <location>
        <position position="23"/>
    </location>
    <ligand>
        <name>Mg(2+)</name>
        <dbReference type="ChEBI" id="CHEBI:18420"/>
    </ligand>
</feature>
<feature type="binding site" evidence="1">
    <location>
        <position position="91"/>
    </location>
    <ligand>
        <name>ATP</name>
        <dbReference type="ChEBI" id="CHEBI:30616"/>
    </ligand>
</feature>
<feature type="binding site" evidence="1">
    <location>
        <position position="91"/>
    </location>
    <ligand>
        <name>CTP</name>
        <dbReference type="ChEBI" id="CHEBI:37563"/>
    </ligand>
</feature>
<feature type="binding site" evidence="1">
    <location>
        <position position="137"/>
    </location>
    <ligand>
        <name>ATP</name>
        <dbReference type="ChEBI" id="CHEBI:30616"/>
    </ligand>
</feature>
<feature type="binding site" evidence="1">
    <location>
        <position position="137"/>
    </location>
    <ligand>
        <name>CTP</name>
        <dbReference type="ChEBI" id="CHEBI:37563"/>
    </ligand>
</feature>
<feature type="binding site" evidence="1">
    <location>
        <position position="140"/>
    </location>
    <ligand>
        <name>ATP</name>
        <dbReference type="ChEBI" id="CHEBI:30616"/>
    </ligand>
</feature>
<feature type="binding site" evidence="1">
    <location>
        <position position="140"/>
    </location>
    <ligand>
        <name>CTP</name>
        <dbReference type="ChEBI" id="CHEBI:37563"/>
    </ligand>
</feature>
<gene>
    <name evidence="1" type="primary">cca</name>
    <name type="ordered locus">Shewmr7_2979</name>
</gene>
<name>CCA_SHESR</name>
<comment type="function">
    <text evidence="1">Catalyzes the addition and repair of the essential 3'-terminal CCA sequence in tRNAs without using a nucleic acid template. Adds these three nucleotides in the order of C, C, and A to the tRNA nucleotide-73, using CTP and ATP as substrates and producing inorganic pyrophosphate. tRNA 3'-terminal CCA addition is required both for tRNA processing and repair. Also involved in tRNA surveillance by mediating tandem CCA addition to generate a CCACCA at the 3' terminus of unstable tRNAs. While stable tRNAs receive only 3'-terminal CCA, unstable tRNAs are marked with CCACCA and rapidly degraded.</text>
</comment>
<comment type="catalytic activity">
    <reaction evidence="1">
        <text>a tRNA precursor + 2 CTP + ATP = a tRNA with a 3' CCA end + 3 diphosphate</text>
        <dbReference type="Rhea" id="RHEA:14433"/>
        <dbReference type="Rhea" id="RHEA-COMP:10465"/>
        <dbReference type="Rhea" id="RHEA-COMP:10468"/>
        <dbReference type="ChEBI" id="CHEBI:30616"/>
        <dbReference type="ChEBI" id="CHEBI:33019"/>
        <dbReference type="ChEBI" id="CHEBI:37563"/>
        <dbReference type="ChEBI" id="CHEBI:74896"/>
        <dbReference type="ChEBI" id="CHEBI:83071"/>
        <dbReference type="EC" id="2.7.7.72"/>
    </reaction>
</comment>
<comment type="catalytic activity">
    <reaction evidence="1">
        <text>a tRNA with a 3' CCA end + 2 CTP + ATP = a tRNA with a 3' CCACCA end + 3 diphosphate</text>
        <dbReference type="Rhea" id="RHEA:76235"/>
        <dbReference type="Rhea" id="RHEA-COMP:10468"/>
        <dbReference type="Rhea" id="RHEA-COMP:18655"/>
        <dbReference type="ChEBI" id="CHEBI:30616"/>
        <dbReference type="ChEBI" id="CHEBI:33019"/>
        <dbReference type="ChEBI" id="CHEBI:37563"/>
        <dbReference type="ChEBI" id="CHEBI:83071"/>
        <dbReference type="ChEBI" id="CHEBI:195187"/>
    </reaction>
    <physiologicalReaction direction="left-to-right" evidence="1">
        <dbReference type="Rhea" id="RHEA:76236"/>
    </physiologicalReaction>
</comment>
<comment type="cofactor">
    <cofactor evidence="1">
        <name>Mg(2+)</name>
        <dbReference type="ChEBI" id="CHEBI:18420"/>
    </cofactor>
    <text evidence="1">Magnesium is required for nucleotidyltransferase activity.</text>
</comment>
<comment type="cofactor">
    <cofactor evidence="1">
        <name>Ni(2+)</name>
        <dbReference type="ChEBI" id="CHEBI:49786"/>
    </cofactor>
    <text evidence="1">Nickel for phosphatase activity.</text>
</comment>
<comment type="subunit">
    <text evidence="1">Monomer. Can also form homodimers and oligomers.</text>
</comment>
<comment type="domain">
    <text evidence="1">Comprises two domains: an N-terminal domain containing the nucleotidyltransferase activity and a C-terminal HD domain associated with both phosphodiesterase and phosphatase activities.</text>
</comment>
<comment type="miscellaneous">
    <text evidence="1">A single active site specifically recognizes both ATP and CTP and is responsible for their addition.</text>
</comment>
<comment type="similarity">
    <text evidence="1">Belongs to the tRNA nucleotidyltransferase/poly(A) polymerase family. Bacterial CCA-adding enzyme type 1 subfamily.</text>
</comment>
<accession>Q0HSE2</accession>
<reference key="1">
    <citation type="submission" date="2006-08" db="EMBL/GenBank/DDBJ databases">
        <title>Complete sequence of chromosome 1 of Shewanella sp. MR-7.</title>
        <authorList>
            <person name="Copeland A."/>
            <person name="Lucas S."/>
            <person name="Lapidus A."/>
            <person name="Barry K."/>
            <person name="Detter J.C."/>
            <person name="Glavina del Rio T."/>
            <person name="Hammon N."/>
            <person name="Israni S."/>
            <person name="Dalin E."/>
            <person name="Tice H."/>
            <person name="Pitluck S."/>
            <person name="Kiss H."/>
            <person name="Brettin T."/>
            <person name="Bruce D."/>
            <person name="Han C."/>
            <person name="Tapia R."/>
            <person name="Gilna P."/>
            <person name="Schmutz J."/>
            <person name="Larimer F."/>
            <person name="Land M."/>
            <person name="Hauser L."/>
            <person name="Kyrpides N."/>
            <person name="Mikhailova N."/>
            <person name="Nealson K."/>
            <person name="Konstantinidis K."/>
            <person name="Klappenbach J."/>
            <person name="Tiedje J."/>
            <person name="Richardson P."/>
        </authorList>
    </citation>
    <scope>NUCLEOTIDE SEQUENCE [LARGE SCALE GENOMIC DNA]</scope>
    <source>
        <strain>MR-7</strain>
    </source>
</reference>
<evidence type="ECO:0000255" key="1">
    <source>
        <dbReference type="HAMAP-Rule" id="MF_01261"/>
    </source>
</evidence>
<sequence length="416" mass="46933">MKIYLVGGAVRDSLLNLPIKDKDFMVVGATPEQMQQLGYRQVGKDFPVFLHPKTQQEYALARTERKVGLGYGGFSCYASPDVTLEQDLLRRDLTINAIAQDEAGNLHDPFHGIADIEARQLRHVSAAFSEDPLRVLRVARFAARFHGLGFEIAPETMALMQHMSQTEELTALTPERVWQEVDKSLGGPHPEVFFEVLRQCGALKVLFPEIDALFGVPQPEKWHPEIDTGLHTMMVLAQSSSMTEEKAVRFAALVHDLGKALSPKEHWPKHHGHGQKGLPVIKSLCERLRVPNEYRDLALLVSDQHQNVHQAFELRSETIIKLFDKADFWRKPERLKQLLLACIADMRGRTGFEHQPYPQSDYLNACFLAANNVDVKAIIAAGFQGAQIKQALNSKRIEVVEQVKLNWQQSQAKQTP</sequence>
<protein>
    <recommendedName>
        <fullName evidence="1">Multifunctional CCA protein</fullName>
    </recommendedName>
    <domain>
        <recommendedName>
            <fullName evidence="1">CCA-adding enzyme</fullName>
            <ecNumber evidence="1">2.7.7.72</ecNumber>
        </recommendedName>
        <alternativeName>
            <fullName evidence="1">CCA tRNA nucleotidyltransferase</fullName>
        </alternativeName>
        <alternativeName>
            <fullName evidence="1">tRNA CCA-pyrophosphorylase</fullName>
        </alternativeName>
        <alternativeName>
            <fullName evidence="1">tRNA adenylyl-/cytidylyl-transferase</fullName>
        </alternativeName>
        <alternativeName>
            <fullName evidence="1">tRNA nucleotidyltransferase</fullName>
        </alternativeName>
        <alternativeName>
            <fullName evidence="1">tRNA-NT</fullName>
        </alternativeName>
    </domain>
    <domain>
        <recommendedName>
            <fullName evidence="1">2'-nucleotidase</fullName>
            <ecNumber evidence="1">3.1.3.-</ecNumber>
        </recommendedName>
    </domain>
    <domain>
        <recommendedName>
            <fullName evidence="1">2',3'-cyclic phosphodiesterase</fullName>
            <ecNumber evidence="1">3.1.4.-</ecNumber>
        </recommendedName>
    </domain>
    <domain>
        <recommendedName>
            <fullName evidence="1">Phosphatase</fullName>
            <ecNumber evidence="1">3.1.3.-</ecNumber>
        </recommendedName>
    </domain>
</protein>
<dbReference type="EC" id="2.7.7.72" evidence="1"/>
<dbReference type="EC" id="3.1.3.-" evidence="1"/>
<dbReference type="EC" id="3.1.4.-" evidence="1"/>
<dbReference type="EMBL" id="CP000444">
    <property type="protein sequence ID" value="ABI43963.1"/>
    <property type="molecule type" value="Genomic_DNA"/>
</dbReference>
<dbReference type="SMR" id="Q0HSE2"/>
<dbReference type="KEGG" id="shm:Shewmr7_2979"/>
<dbReference type="HOGENOM" id="CLU_015961_1_1_6"/>
<dbReference type="GO" id="GO:0005524">
    <property type="term" value="F:ATP binding"/>
    <property type="evidence" value="ECO:0007669"/>
    <property type="project" value="UniProtKB-UniRule"/>
</dbReference>
<dbReference type="GO" id="GO:0004810">
    <property type="term" value="F:CCA tRNA nucleotidyltransferase activity"/>
    <property type="evidence" value="ECO:0007669"/>
    <property type="project" value="UniProtKB-UniRule"/>
</dbReference>
<dbReference type="GO" id="GO:0004112">
    <property type="term" value="F:cyclic-nucleotide phosphodiesterase activity"/>
    <property type="evidence" value="ECO:0007669"/>
    <property type="project" value="UniProtKB-UniRule"/>
</dbReference>
<dbReference type="GO" id="GO:0000287">
    <property type="term" value="F:magnesium ion binding"/>
    <property type="evidence" value="ECO:0007669"/>
    <property type="project" value="UniProtKB-UniRule"/>
</dbReference>
<dbReference type="GO" id="GO:0016791">
    <property type="term" value="F:phosphatase activity"/>
    <property type="evidence" value="ECO:0007669"/>
    <property type="project" value="UniProtKB-UniRule"/>
</dbReference>
<dbReference type="GO" id="GO:0000049">
    <property type="term" value="F:tRNA binding"/>
    <property type="evidence" value="ECO:0007669"/>
    <property type="project" value="UniProtKB-UniRule"/>
</dbReference>
<dbReference type="GO" id="GO:0042245">
    <property type="term" value="P:RNA repair"/>
    <property type="evidence" value="ECO:0007669"/>
    <property type="project" value="UniProtKB-KW"/>
</dbReference>
<dbReference type="GO" id="GO:0001680">
    <property type="term" value="P:tRNA 3'-terminal CCA addition"/>
    <property type="evidence" value="ECO:0007669"/>
    <property type="project" value="UniProtKB-UniRule"/>
</dbReference>
<dbReference type="CDD" id="cd00077">
    <property type="entry name" value="HDc"/>
    <property type="match status" value="1"/>
</dbReference>
<dbReference type="CDD" id="cd05398">
    <property type="entry name" value="NT_ClassII-CCAase"/>
    <property type="match status" value="1"/>
</dbReference>
<dbReference type="FunFam" id="1.10.3090.10:FF:000001">
    <property type="entry name" value="Multifunctional CCA protein"/>
    <property type="match status" value="1"/>
</dbReference>
<dbReference type="Gene3D" id="3.30.460.10">
    <property type="entry name" value="Beta Polymerase, domain 2"/>
    <property type="match status" value="1"/>
</dbReference>
<dbReference type="Gene3D" id="1.10.3090.10">
    <property type="entry name" value="cca-adding enzyme, domain 2"/>
    <property type="match status" value="1"/>
</dbReference>
<dbReference type="HAMAP" id="MF_01261">
    <property type="entry name" value="CCA_bact_type1"/>
    <property type="match status" value="1"/>
</dbReference>
<dbReference type="HAMAP" id="MF_01262">
    <property type="entry name" value="CCA_bact_type2"/>
    <property type="match status" value="1"/>
</dbReference>
<dbReference type="InterPro" id="IPR012006">
    <property type="entry name" value="CCA_bact"/>
</dbReference>
<dbReference type="InterPro" id="IPR003607">
    <property type="entry name" value="HD/PDEase_dom"/>
</dbReference>
<dbReference type="InterPro" id="IPR006674">
    <property type="entry name" value="HD_domain"/>
</dbReference>
<dbReference type="InterPro" id="IPR043519">
    <property type="entry name" value="NT_sf"/>
</dbReference>
<dbReference type="InterPro" id="IPR002646">
    <property type="entry name" value="PolA_pol_head_dom"/>
</dbReference>
<dbReference type="InterPro" id="IPR032828">
    <property type="entry name" value="PolyA_RNA-bd"/>
</dbReference>
<dbReference type="InterPro" id="IPR050124">
    <property type="entry name" value="tRNA_CCA-adding_enzyme"/>
</dbReference>
<dbReference type="NCBIfam" id="NF008137">
    <property type="entry name" value="PRK10885.1"/>
    <property type="match status" value="1"/>
</dbReference>
<dbReference type="PANTHER" id="PTHR47545">
    <property type="entry name" value="MULTIFUNCTIONAL CCA PROTEIN"/>
    <property type="match status" value="1"/>
</dbReference>
<dbReference type="PANTHER" id="PTHR47545:SF1">
    <property type="entry name" value="MULTIFUNCTIONAL CCA PROTEIN"/>
    <property type="match status" value="1"/>
</dbReference>
<dbReference type="Pfam" id="PF01966">
    <property type="entry name" value="HD"/>
    <property type="match status" value="1"/>
</dbReference>
<dbReference type="Pfam" id="PF01743">
    <property type="entry name" value="PolyA_pol"/>
    <property type="match status" value="1"/>
</dbReference>
<dbReference type="Pfam" id="PF12627">
    <property type="entry name" value="PolyA_pol_RNAbd"/>
    <property type="match status" value="1"/>
</dbReference>
<dbReference type="PIRSF" id="PIRSF000813">
    <property type="entry name" value="CCA_bact"/>
    <property type="match status" value="1"/>
</dbReference>
<dbReference type="SUPFAM" id="SSF81301">
    <property type="entry name" value="Nucleotidyltransferase"/>
    <property type="match status" value="1"/>
</dbReference>
<dbReference type="SUPFAM" id="SSF81891">
    <property type="entry name" value="Poly A polymerase C-terminal region-like"/>
    <property type="match status" value="1"/>
</dbReference>
<dbReference type="PROSITE" id="PS51831">
    <property type="entry name" value="HD"/>
    <property type="match status" value="1"/>
</dbReference>
<keyword id="KW-0067">ATP-binding</keyword>
<keyword id="KW-0378">Hydrolase</keyword>
<keyword id="KW-0460">Magnesium</keyword>
<keyword id="KW-0479">Metal-binding</keyword>
<keyword id="KW-0511">Multifunctional enzyme</keyword>
<keyword id="KW-0533">Nickel</keyword>
<keyword id="KW-0547">Nucleotide-binding</keyword>
<keyword id="KW-0548">Nucleotidyltransferase</keyword>
<keyword id="KW-0692">RNA repair</keyword>
<keyword id="KW-0694">RNA-binding</keyword>
<keyword id="KW-0808">Transferase</keyword>
<keyword id="KW-0819">tRNA processing</keyword>